<protein>
    <recommendedName>
        <fullName>Eukaryotic translation initiation factor 4E-3</fullName>
        <shortName>eIF-4E-3</shortName>
        <shortName>eIF4E-3</shortName>
    </recommendedName>
    <alternativeName>
        <fullName>eIF-4F 25 kDa subunit</fullName>
    </alternativeName>
    <alternativeName>
        <fullName>mRNA cap-binding protein</fullName>
    </alternativeName>
</protein>
<keyword id="KW-0002">3D-structure</keyword>
<keyword id="KW-0025">Alternative splicing</keyword>
<keyword id="KW-0963">Cytoplasm</keyword>
<keyword id="KW-0396">Initiation factor</keyword>
<keyword id="KW-0648">Protein biosynthesis</keyword>
<keyword id="KW-1185">Reference proteome</keyword>
<keyword id="KW-0694">RNA-binding</keyword>
<keyword id="KW-0943">RNA-mediated gene silencing</keyword>
<keyword id="KW-0810">Translation regulation</keyword>
<proteinExistence type="evidence at protein level"/>
<comment type="function">
    <text evidence="2 4 6 8 10">Recognizes and binds the 7-methylguanosine-containing mRNA cap during an early step in the initiation of protein synthesis and facilitates ribosome binding by inducing the unwinding of the mRNAs secondary structures. All 5 eIF4E proteins bind monomethyl cap structures. Only ife-1, ife-2 and ife-5 bind trimethyl cap structures which result from trans-splicing. Translation of trimethyl cap structure mRNAs may be regulated by intracellular redox state; disulfide bonds change the width and depth of the cap-binding cavity determining selectivity to mRNA caps. Ife-3 is essential for viability. Component of the pid-1 and tost-1 variants of the PETISCO complexes, which have roles in the biogenesis of a class of 21 nucleotide PIWI-interacting RNAs (piRNAs) that possess a uracil residue at the 5'-end (also called 21U-RNAs) and embryogenesis, respectively (PubMed:31147388, PubMed:31216475). Within the pid-1 variant of the PETISCO complex binds to capped 21U-RNA precursor molecules, possibly playing a role in the processing of the 5' end of the molecules to promote binding of other complex components such as pid-3 (PubMed:31147388). However, it is not essential for the biogenesis of 21U-RNAs by itself (PubMed:31147388). Within the tost-1 variant of the PETISCO complex binds to splice leader SL1 RNA fragments to possibly play a role in their processing (PubMed:31147388).</text>
</comment>
<comment type="subunit">
    <text evidence="5 6 7 10">eIF4F is a multi-subunit complex, the composition of which varies with external and internal environmental conditions. It is composed of at least eIF4A, eIF4E and eIF4G. eIF4E is also known to interact with other partners. Interacts with mxt (PubMed:26294658). Component of the pid-1 variant of the PETISCO complex (also called the pid-3, erh-2, tofu-6, and ife-3 small RNA complex) containing at least pid-1, tofu-6, ife-3, pid-3, and erh-2, which is required for the biogenesis of a class of 21 nucleotide PIWI-interacting RNAs (piRNAs) that possess a uracil residue at the 5'-end (also called 21U-RNAs) (PubMed:31147388, PubMed:31216475). Component of the tost-1 variant of the PETISCO complex (also called the pid-3, erh-2, tofu-6, and ife-3 small RNA complex) containing at least tost-1, tofu-6, ife-3, pid-3, and erh-2, which plays an essential role in embryogenesis (PubMed:31147388, PubMed:31216475). Within the pid-1 and tost-1 variants of the PETISCO complexes interacts with tofu-6 (via C-terminus) (PubMed:31147388, PubMed:31216475). In contrast to the pid-1 variant of the PETISCO complex, the tost-1 variant of the PETISCO complex plays a minor role in the biogenesis of 21U-RNAs (PubMed:31147388).</text>
</comment>
<comment type="interaction">
    <interactant intactId="EBI-330119">
        <id>O61955</id>
    </interactant>
    <interactant intactId="EBI-2411746">
        <id>Q22497</id>
        <label>CELE_T14G10.8</label>
    </interactant>
    <organismsDiffer>false</organismsDiffer>
    <experiments>5</experiments>
</comment>
<comment type="interaction">
    <interactant intactId="EBI-330119">
        <id>O61955</id>
    </interactant>
    <interactant intactId="EBI-2001916">
        <id>Q20898</id>
        <label>ifet-1</label>
    </interactant>
    <organismsDiffer>false</organismsDiffer>
    <experiments>3</experiments>
</comment>
<comment type="interaction">
    <interactant intactId="EBI-330119">
        <id>O61955</id>
    </interactant>
    <interactant intactId="EBI-330111">
        <id>Q9XW13</id>
        <label>mxt-1</label>
    </interactant>
    <organismsDiffer>false</organismsDiffer>
    <experiments>5</experiments>
</comment>
<comment type="interaction">
    <interactant intactId="EBI-330119">
        <id>O61955</id>
    </interactant>
    <interactant intactId="EBI-2001908">
        <id>Q09293</id>
        <label>tofu-6</label>
    </interactant>
    <organismsDiffer>false</organismsDiffer>
    <experiments>5</experiments>
</comment>
<comment type="subcellular location">
    <subcellularLocation>
        <location evidence="6">Cytoplasmic granule</location>
    </subcellularLocation>
    <subcellularLocation>
        <location evidence="6 7">Cytoplasm</location>
        <location evidence="6 7">Perinuclear region</location>
    </subcellularLocation>
    <text evidence="6 7">Localizes to cytoplasmic granules in early embryos (PubMed:31147388). Localizes to puncta in the perinuclear region in the germline syncytium (PubMed:31147388, PubMed:31216475).</text>
</comment>
<comment type="alternative products">
    <event type="alternative splicing"/>
    <isoform>
        <id>O61955-1</id>
        <name evidence="12">b</name>
        <sequence type="displayed"/>
    </isoform>
    <isoform>
        <id>O61955-2</id>
        <name evidence="11">a</name>
        <sequence type="described" ref="VSP_008297"/>
    </isoform>
    <isoform>
        <id>O61955-3</id>
        <name evidence="13">c</name>
        <sequence type="described" ref="VSP_008298"/>
    </isoform>
</comment>
<comment type="tissue specificity">
    <text evidence="3 6 7">Highly expressed in the germline (at protein level).</text>
</comment>
<comment type="developmental stage">
    <text evidence="6">Expressed from early embryogenesis (at protein level).</text>
</comment>
<comment type="disruption phenotype">
    <text evidence="6">RNAi-mediated knockdown results in maternal effect lethal (Mel phenotype) and masculinization of the germline (Mog phenotype) phenotypes (PubMed:31147388). RNAi-mediated knockdown results in defective activity of the PIWI-interacting RNA (piRNA) silencing pathway (PubMed:31147388).</text>
</comment>
<comment type="miscellaneous">
    <text>Inactivation of ife-3 results in 100% embryonic lethality.</text>
</comment>
<comment type="similarity">
    <text evidence="9">Belongs to the eukaryotic initiation factor 4E family.</text>
</comment>
<reference key="1">
    <citation type="journal article" date="1998" name="J. Biol. Chem.">
        <title>Multiple isoforms of eukaryotic protein synthesis initiation factor 4E in Caenorhabditis elegans can distinguish between mono- and trimethylated mRNA cap structures.</title>
        <authorList>
            <person name="Jankowska-Anyszka M."/>
            <person name="Lamphear B.J."/>
            <person name="Aamodt E.J."/>
            <person name="Harrington T."/>
            <person name="Darzynkiewicz E."/>
            <person name="Stolarski R."/>
            <person name="Rhoads R.E."/>
        </authorList>
    </citation>
    <scope>NUCLEOTIDE SEQUENCE [MRNA] (ISOFORM A)</scope>
    <scope>FUNCTION</scope>
    <source>
        <strain>Bristol N2</strain>
    </source>
</reference>
<reference key="2">
    <citation type="journal article" date="1998" name="Science">
        <title>Genome sequence of the nematode C. elegans: a platform for investigating biology.</title>
        <authorList>
            <consortium name="The C. elegans sequencing consortium"/>
        </authorList>
    </citation>
    <scope>NUCLEOTIDE SEQUENCE [LARGE SCALE GENOMIC DNA]</scope>
    <source>
        <strain>Bristol N2</strain>
    </source>
</reference>
<reference key="3">
    <citation type="journal article" date="2000" name="J. Biol. Chem.">
        <title>Functional characterization of five eIF4E isoforms in Caenorhabditis elegans.</title>
        <authorList>
            <person name="Keiper B.D."/>
            <person name="Lamphear B.J."/>
            <person name="Deshpande A.M."/>
            <person name="Jankowska-Anyszka M."/>
            <person name="Aamodt E.J."/>
            <person name="Blumenthal T."/>
            <person name="Rhoads R.E."/>
        </authorList>
    </citation>
    <scope>FUNCTION</scope>
    <source>
        <strain>Bristol N2</strain>
    </source>
</reference>
<reference key="4">
    <citation type="journal article" date="2001" name="Development">
        <title>An isoform of eIF4E is a component of germ granules and is required for spermatogenesis in C. elegans.</title>
        <authorList>
            <person name="Amiri A."/>
            <person name="Keiper B.D."/>
            <person name="Kawasaki I."/>
            <person name="Fan Y."/>
            <person name="Kohara Y."/>
            <person name="Rhoads R.E."/>
            <person name="Strome S."/>
        </authorList>
    </citation>
    <scope>TISSUE SPECIFICITY</scope>
    <source>
        <strain>Bristol N2</strain>
    </source>
</reference>
<reference key="5">
    <citation type="journal article" date="2002" name="Acta Biochim. Pol.">
        <title>Interaction of three Caenorhabditis elegans isoforms of translation initiation factor eIF4E with mono- and trimethylated mRNA 5' cap analogues.</title>
        <authorList>
            <person name="Stachelska A."/>
            <person name="Wieczorek Z."/>
            <person name="Ruszczynska K."/>
            <person name="Stolarski R."/>
            <person name="Pietrzak M."/>
            <person name="Lamphear B.J."/>
            <person name="Rhoads R.E."/>
            <person name="Darzynkiewicz E."/>
            <person name="Jankowska-Anyszka M."/>
        </authorList>
    </citation>
    <scope>FUNCTION</scope>
</reference>
<reference key="6">
    <citation type="journal article" date="2019" name="Cell Rep.">
        <title>Functional Proteomics Identifies a PICS Complex Required for piRNA Maturation and Chromosome Segregation.</title>
        <authorList>
            <person name="Zeng C."/>
            <person name="Weng C."/>
            <person name="Wang X."/>
            <person name="Yan Y.H."/>
            <person name="Li W.J."/>
            <person name="Xu D."/>
            <person name="Hong M."/>
            <person name="Liao S."/>
            <person name="Dong M.Q."/>
            <person name="Feng X."/>
            <person name="Xu C."/>
            <person name="Guang S."/>
        </authorList>
    </citation>
    <scope>FUNCTION</scope>
    <scope>IDENTIFICATION IN THE PETISCO COMPLEXES</scope>
    <scope>INTERACTION WITH TOFU-6</scope>
    <scope>SUBCELLULAR LOCATION</scope>
    <scope>TISSUE SPECIFICITY</scope>
</reference>
<reference key="7">
    <citation type="journal article" date="2019" name="Genes Dev.">
        <title>PETISCO is a novel protein complex required for 21U RNA biogenesis and embryonic viability.</title>
        <authorList>
            <person name="Cordeiro Rodrigues R.J."/>
            <person name="de Jesus Domingues A.M."/>
            <person name="Hellmann S."/>
            <person name="Dietz S."/>
            <person name="de Albuquerque B.F.M."/>
            <person name="Renz C."/>
            <person name="Ulrich H.D."/>
            <person name="Sarkies P."/>
            <person name="Butter F."/>
            <person name="Ketting R.F."/>
        </authorList>
    </citation>
    <scope>FUNCTION</scope>
    <scope>IDENTIFICATION IN THE PETISCO COMPLEXES</scope>
    <scope>INTERACTION WITH TOFU-6</scope>
    <scope>SUBCELLULAR LOCATION</scope>
    <scope>TISSUE SPECIFICITY</scope>
    <scope>DEVELOPMENTAL STAGE</scope>
    <scope>DISRUPTION PHENOTYPE</scope>
</reference>
<reference key="8">
    <citation type="journal article" date="2015" name="Genes Dev.">
        <title>Mextli proteins use both canonical bipartite and novel tripartite binding modes to form eIF4E complexes that display differential sensitivity to 4E-BP regulation.</title>
        <authorList>
            <person name="Peter D."/>
            <person name="Weber R."/>
            <person name="Kone C."/>
            <person name="Chung M.Y."/>
            <person name="Ebertsch L."/>
            <person name="Truffault V."/>
            <person name="Weichenrieder O."/>
            <person name="Igreja C."/>
            <person name="Izaurralde E."/>
        </authorList>
    </citation>
    <scope>X-RAY CRYSTALLOGRAPHY (1.66 ANGSTROMS) OF 30-215 IN COMPLEX WITH MXT</scope>
    <scope>INTERACTION WITH MXT</scope>
    <scope>MUTAGENESIS OF VAL-58 AND ILE-74</scope>
</reference>
<evidence type="ECO:0000256" key="1">
    <source>
        <dbReference type="SAM" id="MobiDB-lite"/>
    </source>
</evidence>
<evidence type="ECO:0000269" key="2">
    <source>
    </source>
</evidence>
<evidence type="ECO:0000269" key="3">
    <source>
    </source>
</evidence>
<evidence type="ECO:0000269" key="4">
    <source>
    </source>
</evidence>
<evidence type="ECO:0000269" key="5">
    <source>
    </source>
</evidence>
<evidence type="ECO:0000269" key="6">
    <source>
    </source>
</evidence>
<evidence type="ECO:0000269" key="7">
    <source>
    </source>
</evidence>
<evidence type="ECO:0000269" key="8">
    <source>
    </source>
</evidence>
<evidence type="ECO:0000305" key="9"/>
<evidence type="ECO:0000305" key="10">
    <source>
    </source>
</evidence>
<evidence type="ECO:0000312" key="11">
    <source>
        <dbReference type="WormBase" id="B0348.6a"/>
    </source>
</evidence>
<evidence type="ECO:0000312" key="12">
    <source>
        <dbReference type="WormBase" id="B0348.6b"/>
    </source>
</evidence>
<evidence type="ECO:0000312" key="13">
    <source>
        <dbReference type="WormBase" id="B0348.6c"/>
    </source>
</evidence>
<evidence type="ECO:0007829" key="14">
    <source>
        <dbReference type="PDB" id="5ABX"/>
    </source>
</evidence>
<name>IF4E3_CAEEL</name>
<dbReference type="EMBL" id="BX284605">
    <property type="protein sequence ID" value="CCD61786.1"/>
    <property type="molecule type" value="Genomic_DNA"/>
</dbReference>
<dbReference type="EMBL" id="BX284605">
    <property type="protein sequence ID" value="CCD61787.1"/>
    <property type="molecule type" value="Genomic_DNA"/>
</dbReference>
<dbReference type="EMBL" id="BX284605">
    <property type="protein sequence ID" value="CCD61788.1"/>
    <property type="molecule type" value="Genomic_DNA"/>
</dbReference>
<dbReference type="PIR" id="T33281">
    <property type="entry name" value="T33281"/>
</dbReference>
<dbReference type="RefSeq" id="NP_503123.1">
    <molecule id="O61955-1"/>
    <property type="nucleotide sequence ID" value="NM_070722.6"/>
</dbReference>
<dbReference type="RefSeq" id="NP_503124.1">
    <molecule id="O61955-2"/>
    <property type="nucleotide sequence ID" value="NM_070723.8"/>
</dbReference>
<dbReference type="RefSeq" id="NP_741502.1">
    <molecule id="O61955-3"/>
    <property type="nucleotide sequence ID" value="NM_171920.6"/>
</dbReference>
<dbReference type="PDB" id="5ABX">
    <property type="method" value="X-ray"/>
    <property type="resolution" value="1.66 A"/>
    <property type="chains" value="A=30-215"/>
</dbReference>
<dbReference type="PDB" id="5ABY">
    <property type="method" value="X-ray"/>
    <property type="resolution" value="1.95 A"/>
    <property type="chains" value="A/C/E=30-215"/>
</dbReference>
<dbReference type="PDBsum" id="5ABX"/>
<dbReference type="PDBsum" id="5ABY"/>
<dbReference type="SMR" id="O61955"/>
<dbReference type="BioGRID" id="43611">
    <property type="interactions" value="29"/>
</dbReference>
<dbReference type="ComplexPortal" id="CPX-3482">
    <property type="entry name" value="Eukaryotic translation initiation factor 4E-Mxt complex"/>
</dbReference>
<dbReference type="ComplexPortal" id="CPX-4306">
    <property type="entry name" value="PETISCO, pid-1 variant"/>
</dbReference>
<dbReference type="ComplexPortal" id="CPX-4307">
    <property type="entry name" value="PETISCO, tost-1 variant"/>
</dbReference>
<dbReference type="DIP" id="DIP-24919N"/>
<dbReference type="FunCoup" id="O61955">
    <property type="interactions" value="2253"/>
</dbReference>
<dbReference type="IntAct" id="O61955">
    <property type="interactions" value="21"/>
</dbReference>
<dbReference type="STRING" id="6239.B0348.6b.1"/>
<dbReference type="iPTMnet" id="O61955"/>
<dbReference type="PaxDb" id="6239-B0348.6b.1"/>
<dbReference type="PeptideAtlas" id="O61955"/>
<dbReference type="EnsemblMetazoa" id="B0348.6a.1">
    <molecule id="O61955-2"/>
    <property type="protein sequence ID" value="B0348.6a.1"/>
    <property type="gene ID" value="WBGene00002061"/>
</dbReference>
<dbReference type="EnsemblMetazoa" id="B0348.6b.1">
    <molecule id="O61955-1"/>
    <property type="protein sequence ID" value="B0348.6b.1"/>
    <property type="gene ID" value="WBGene00002061"/>
</dbReference>
<dbReference type="EnsemblMetazoa" id="B0348.6c.1">
    <molecule id="O61955-3"/>
    <property type="protein sequence ID" value="B0348.6c.1"/>
    <property type="gene ID" value="WBGene00002061"/>
</dbReference>
<dbReference type="GeneID" id="178536"/>
<dbReference type="KEGG" id="cel:CELE_B0348.6"/>
<dbReference type="UCSC" id="B0348.6a.2">
    <molecule id="O61955-1"/>
    <property type="organism name" value="c. elegans"/>
</dbReference>
<dbReference type="AGR" id="WB:WBGene00002061"/>
<dbReference type="CTD" id="178536"/>
<dbReference type="WormBase" id="B0348.6a">
    <molecule id="O61955-2"/>
    <property type="protein sequence ID" value="CE17331"/>
    <property type="gene ID" value="WBGene00002061"/>
    <property type="gene designation" value="ife-3"/>
</dbReference>
<dbReference type="WormBase" id="B0348.6b">
    <molecule id="O61955-1"/>
    <property type="protein sequence ID" value="CE27570"/>
    <property type="gene ID" value="WBGene00002061"/>
    <property type="gene designation" value="ife-3"/>
</dbReference>
<dbReference type="WormBase" id="B0348.6c">
    <molecule id="O61955-3"/>
    <property type="protein sequence ID" value="CE30590"/>
    <property type="gene ID" value="WBGene00002061"/>
    <property type="gene designation" value="ife-3"/>
</dbReference>
<dbReference type="eggNOG" id="KOG1670">
    <property type="taxonomic scope" value="Eukaryota"/>
</dbReference>
<dbReference type="GeneTree" id="ENSGT00940000166192"/>
<dbReference type="InParanoid" id="O61955"/>
<dbReference type="OMA" id="VKPRICL"/>
<dbReference type="OrthoDB" id="590761at2759"/>
<dbReference type="PhylomeDB" id="O61955"/>
<dbReference type="Reactome" id="R-CEL-1169408">
    <property type="pathway name" value="ISG15 antiviral mechanism"/>
</dbReference>
<dbReference type="Reactome" id="R-CEL-156827">
    <property type="pathway name" value="L13a-mediated translational silencing of Ceruloplasmin expression"/>
</dbReference>
<dbReference type="Reactome" id="R-CEL-72649">
    <property type="pathway name" value="Translation initiation complex formation"/>
</dbReference>
<dbReference type="Reactome" id="R-CEL-72662">
    <property type="pathway name" value="Activation of the mRNA upon binding of the cap-binding complex and eIFs, and subsequent binding to 43S"/>
</dbReference>
<dbReference type="Reactome" id="R-CEL-72702">
    <property type="pathway name" value="Ribosomal scanning and start codon recognition"/>
</dbReference>
<dbReference type="EvolutionaryTrace" id="O61955"/>
<dbReference type="PRO" id="PR:O61955"/>
<dbReference type="Proteomes" id="UP000001940">
    <property type="component" value="Chromosome V"/>
</dbReference>
<dbReference type="Bgee" id="WBGene00002061">
    <property type="expression patterns" value="Expressed in adult organism and 4 other cell types or tissues"/>
</dbReference>
<dbReference type="GO" id="GO:0016281">
    <property type="term" value="C:eukaryotic translation initiation factor 4F complex"/>
    <property type="evidence" value="ECO:0000318"/>
    <property type="project" value="GO_Central"/>
</dbReference>
<dbReference type="GO" id="GO:0048471">
    <property type="term" value="C:perinuclear region of cytoplasm"/>
    <property type="evidence" value="ECO:0007669"/>
    <property type="project" value="UniProtKB-SubCell"/>
</dbReference>
<dbReference type="GO" id="GO:0034518">
    <property type="term" value="C:RNA cap binding complex"/>
    <property type="evidence" value="ECO:0000353"/>
    <property type="project" value="ComplexPortal"/>
</dbReference>
<dbReference type="GO" id="GO:0070992">
    <property type="term" value="C:translation initiation complex"/>
    <property type="evidence" value="ECO:0000303"/>
    <property type="project" value="ComplexPortal"/>
</dbReference>
<dbReference type="GO" id="GO:0000340">
    <property type="term" value="F:RNA 7-methylguanosine cap binding"/>
    <property type="evidence" value="ECO:0000314"/>
    <property type="project" value="WormBase"/>
</dbReference>
<dbReference type="GO" id="GO:0003743">
    <property type="term" value="F:translation initiation factor activity"/>
    <property type="evidence" value="ECO:0000318"/>
    <property type="project" value="GO_Central"/>
</dbReference>
<dbReference type="GO" id="GO:0034585">
    <property type="term" value="P:21U-RNA metabolic process"/>
    <property type="evidence" value="ECO:0000303"/>
    <property type="project" value="ComplexPortal"/>
</dbReference>
<dbReference type="GO" id="GO:0009792">
    <property type="term" value="P:embryo development ending in birth or egg hatching"/>
    <property type="evidence" value="ECO:0000315"/>
    <property type="project" value="WormBase"/>
</dbReference>
<dbReference type="GO" id="GO:0034587">
    <property type="term" value="P:piRNA processing"/>
    <property type="evidence" value="ECO:0000315"/>
    <property type="project" value="ComplexPortal"/>
</dbReference>
<dbReference type="GO" id="GO:0006417">
    <property type="term" value="P:regulation of translation"/>
    <property type="evidence" value="ECO:0007669"/>
    <property type="project" value="UniProtKB-KW"/>
</dbReference>
<dbReference type="GO" id="GO:0006413">
    <property type="term" value="P:translational initiation"/>
    <property type="evidence" value="ECO:0000318"/>
    <property type="project" value="GO_Central"/>
</dbReference>
<dbReference type="FunFam" id="3.30.760.10:FF:000021">
    <property type="entry name" value="Eukaryotic translation initiation factor 4E-3"/>
    <property type="match status" value="1"/>
</dbReference>
<dbReference type="Gene3D" id="3.30.760.10">
    <property type="entry name" value="RNA Cap, Translation Initiation Factor Eif4e"/>
    <property type="match status" value="1"/>
</dbReference>
<dbReference type="InterPro" id="IPR023398">
    <property type="entry name" value="TIF_eIF4e-like"/>
</dbReference>
<dbReference type="InterPro" id="IPR001040">
    <property type="entry name" value="TIF_eIF_4E"/>
</dbReference>
<dbReference type="InterPro" id="IPR019770">
    <property type="entry name" value="TIF_eIF_4E_CS"/>
</dbReference>
<dbReference type="PANTHER" id="PTHR11960">
    <property type="entry name" value="EUKARYOTIC TRANSLATION INITIATION FACTOR 4E RELATED"/>
    <property type="match status" value="1"/>
</dbReference>
<dbReference type="PANTHER" id="PTHR11960:SF69">
    <property type="entry name" value="EUKARYOTIC TRANSLATION INITIATION FACTOR 4E-3"/>
    <property type="match status" value="1"/>
</dbReference>
<dbReference type="Pfam" id="PF01652">
    <property type="entry name" value="IF4E"/>
    <property type="match status" value="1"/>
</dbReference>
<dbReference type="SUPFAM" id="SSF55418">
    <property type="entry name" value="eIF4e-like"/>
    <property type="match status" value="1"/>
</dbReference>
<dbReference type="PROSITE" id="PS00813">
    <property type="entry name" value="IF4E"/>
    <property type="match status" value="1"/>
</dbReference>
<accession>O61955</accession>
<accession>Q8MNX5</accession>
<accession>Q95X31</accession>
<feature type="chain" id="PRO_0000193645" description="Eukaryotic translation initiation factor 4E-3">
    <location>
        <begin position="1"/>
        <end position="251"/>
    </location>
</feature>
<feature type="region of interest" description="Disordered" evidence="1">
    <location>
        <begin position="200"/>
        <end position="251"/>
    </location>
</feature>
<feature type="compositionally biased region" description="Polar residues" evidence="1">
    <location>
        <begin position="230"/>
        <end position="251"/>
    </location>
</feature>
<feature type="splice variant" id="VSP_008297" description="In isoform a." evidence="9">
    <location>
        <begin position="115"/>
        <end position="117"/>
    </location>
</feature>
<feature type="splice variant" id="VSP_008298" description="In isoform c." evidence="9">
    <location>
        <position position="116"/>
    </location>
</feature>
<feature type="mutagenesis site" description="Abolishes interaction with mxt; when associated with A-74." evidence="5">
    <original>V</original>
    <variation>A</variation>
    <location>
        <position position="58"/>
    </location>
</feature>
<feature type="mutagenesis site" description="Abolishes interaction with mxt; when associated with A-74." evidence="5">
    <original>I</original>
    <variation>A</variation>
    <location>
        <position position="74"/>
    </location>
</feature>
<feature type="strand" evidence="14">
    <location>
        <begin position="33"/>
        <end position="43"/>
    </location>
</feature>
<feature type="helix" evidence="14">
    <location>
        <begin position="51"/>
        <end position="54"/>
    </location>
</feature>
<feature type="strand" evidence="14">
    <location>
        <begin position="55"/>
        <end position="63"/>
    </location>
</feature>
<feature type="helix" evidence="14">
    <location>
        <begin position="64"/>
        <end position="72"/>
    </location>
</feature>
<feature type="helix" evidence="14">
    <location>
        <begin position="77"/>
        <end position="79"/>
    </location>
</feature>
<feature type="strand" evidence="14">
    <location>
        <begin position="85"/>
        <end position="90"/>
    </location>
</feature>
<feature type="turn" evidence="14">
    <location>
        <begin position="100"/>
        <end position="104"/>
    </location>
</feature>
<feature type="strand" evidence="14">
    <location>
        <begin position="106"/>
        <end position="112"/>
    </location>
</feature>
<feature type="helix" evidence="14">
    <location>
        <begin position="122"/>
        <end position="136"/>
    </location>
</feature>
<feature type="helix" evidence="14">
    <location>
        <begin position="141"/>
        <end position="146"/>
    </location>
</feature>
<feature type="strand" evidence="14">
    <location>
        <begin position="147"/>
        <end position="153"/>
    </location>
</feature>
<feature type="strand" evidence="14">
    <location>
        <begin position="159"/>
        <end position="166"/>
    </location>
</feature>
<feature type="helix" evidence="14">
    <location>
        <begin position="171"/>
        <end position="185"/>
    </location>
</feature>
<feature type="strand" evidence="14">
    <location>
        <begin position="193"/>
        <end position="197"/>
    </location>
</feature>
<feature type="helix" evidence="14">
    <location>
        <begin position="198"/>
        <end position="202"/>
    </location>
</feature>
<feature type="strand" evidence="14">
    <location>
        <begin position="212"/>
        <end position="215"/>
    </location>
</feature>
<sequence length="251" mass="28179">MSTSVAENKALSASGDVNASDASVPPELLTRHPLQNRWALWYLKADRNKEWEDCLKMVSLFDTVEDFWSLYNHIQSAGGLNWGSDYYLFKEGIKPMWEDVNNVQGGRWLVVVDKQKLQRRTQLLDHYWLELLMAIVGEQFDEYGDYICGAVVNVRQKGDKVSLWTRDATRDDVNLRIGQVLKQKLSIPDTEILRYEVHKDSSARTSSTVKPRICLPAKDPAPVKEKGPAATTSPSNPGTEATGTSPATPTP</sequence>
<gene>
    <name evidence="12" type="primary">ife-3</name>
    <name evidence="12" type="ORF">B0348.6</name>
</gene>
<organism>
    <name type="scientific">Caenorhabditis elegans</name>
    <dbReference type="NCBI Taxonomy" id="6239"/>
    <lineage>
        <taxon>Eukaryota</taxon>
        <taxon>Metazoa</taxon>
        <taxon>Ecdysozoa</taxon>
        <taxon>Nematoda</taxon>
        <taxon>Chromadorea</taxon>
        <taxon>Rhabditida</taxon>
        <taxon>Rhabditina</taxon>
        <taxon>Rhabditomorpha</taxon>
        <taxon>Rhabditoidea</taxon>
        <taxon>Rhabditidae</taxon>
        <taxon>Peloderinae</taxon>
        <taxon>Caenorhabditis</taxon>
    </lineage>
</organism>